<gene>
    <name type="primary">Crip2</name>
    <name type="synonym">Crp2</name>
</gene>
<reference key="1">
    <citation type="journal article" date="1993" name="FEBS Lett.">
        <title>Cloning of CRP2, a novel member of the cysteine-rich protein family with two repeats of an unusual LIM/double zinc-finger motif.</title>
        <authorList>
            <person name="Okano I."/>
            <person name="Yamamoto T."/>
            <person name="Kaji A."/>
            <person name="Kimura T."/>
            <person name="Mizuno K."/>
            <person name="Nakamura T."/>
        </authorList>
    </citation>
    <scope>NUCLEOTIDE SEQUENCE [MRNA]</scope>
    <source>
        <strain>Wistar</strain>
        <tissue>Brain</tissue>
    </source>
</reference>
<reference key="2">
    <citation type="journal article" date="2004" name="Genome Res.">
        <title>The status, quality, and expansion of the NIH full-length cDNA project: the Mammalian Gene Collection (MGC).</title>
        <authorList>
            <consortium name="The MGC Project Team"/>
        </authorList>
    </citation>
    <scope>NUCLEOTIDE SEQUENCE [LARGE SCALE MRNA]</scope>
    <source>
        <tissue>Prostate</tissue>
    </source>
</reference>
<keyword id="KW-0007">Acetylation</keyword>
<keyword id="KW-0440">LIM domain</keyword>
<keyword id="KW-0479">Metal-binding</keyword>
<keyword id="KW-0597">Phosphoprotein</keyword>
<keyword id="KW-1185">Reference proteome</keyword>
<keyword id="KW-0677">Repeat</keyword>
<keyword id="KW-0862">Zinc</keyword>
<dbReference type="EMBL" id="D17512">
    <property type="protein sequence ID" value="BAA04464.1"/>
    <property type="molecule type" value="mRNA"/>
</dbReference>
<dbReference type="EMBL" id="BC061774">
    <property type="protein sequence ID" value="AAH61774.1"/>
    <property type="molecule type" value="mRNA"/>
</dbReference>
<dbReference type="PIR" id="S38745">
    <property type="entry name" value="S38745"/>
</dbReference>
<dbReference type="RefSeq" id="NP_071946.1">
    <property type="nucleotide sequence ID" value="NM_022501.1"/>
</dbReference>
<dbReference type="FunCoup" id="P36201">
    <property type="interactions" value="479"/>
</dbReference>
<dbReference type="IntAct" id="P36201">
    <property type="interactions" value="3"/>
</dbReference>
<dbReference type="STRING" id="10116.ENSRNOP00000006804"/>
<dbReference type="GlyGen" id="P36201">
    <property type="glycosylation" value="1 site, 1 O-linked glycan (1 site)"/>
</dbReference>
<dbReference type="iPTMnet" id="P36201"/>
<dbReference type="PhosphoSitePlus" id="P36201"/>
<dbReference type="jPOST" id="P36201"/>
<dbReference type="PaxDb" id="10116-ENSRNOP00000006804"/>
<dbReference type="Ensembl" id="ENSRNOT00000006804.6">
    <property type="protein sequence ID" value="ENSRNOP00000006804.3"/>
    <property type="gene ID" value="ENSRNOG00000005041.6"/>
</dbReference>
<dbReference type="GeneID" id="338401"/>
<dbReference type="KEGG" id="rno:338401"/>
<dbReference type="UCSC" id="RGD:1302959">
    <property type="organism name" value="rat"/>
</dbReference>
<dbReference type="AGR" id="RGD:1302959"/>
<dbReference type="CTD" id="1397"/>
<dbReference type="RGD" id="1302959">
    <property type="gene designation" value="Crip2"/>
</dbReference>
<dbReference type="eggNOG" id="KOG1700">
    <property type="taxonomic scope" value="Eukaryota"/>
</dbReference>
<dbReference type="GeneTree" id="ENSGT00940000158683"/>
<dbReference type="HOGENOM" id="CLU_054591_2_0_1"/>
<dbReference type="InParanoid" id="P36201"/>
<dbReference type="OMA" id="YEKPCAE"/>
<dbReference type="OrthoDB" id="1679758at2759"/>
<dbReference type="PhylomeDB" id="P36201"/>
<dbReference type="TreeFam" id="TF313758"/>
<dbReference type="PRO" id="PR:P36201"/>
<dbReference type="Proteomes" id="UP000002494">
    <property type="component" value="Chromosome 6"/>
</dbReference>
<dbReference type="Bgee" id="ENSRNOG00000005041">
    <property type="expression patterns" value="Expressed in heart and 19 other cell types or tissues"/>
</dbReference>
<dbReference type="GO" id="GO:0005938">
    <property type="term" value="C:cell cortex"/>
    <property type="evidence" value="ECO:0000266"/>
    <property type="project" value="RGD"/>
</dbReference>
<dbReference type="GO" id="GO:0046872">
    <property type="term" value="F:metal ion binding"/>
    <property type="evidence" value="ECO:0007669"/>
    <property type="project" value="UniProtKB-KW"/>
</dbReference>
<dbReference type="GO" id="GO:0030097">
    <property type="term" value="P:hemopoiesis"/>
    <property type="evidence" value="ECO:0000266"/>
    <property type="project" value="RGD"/>
</dbReference>
<dbReference type="GO" id="GO:0008284">
    <property type="term" value="P:positive regulation of cell population proliferation"/>
    <property type="evidence" value="ECO:0000266"/>
    <property type="project" value="RGD"/>
</dbReference>
<dbReference type="CDD" id="cd09476">
    <property type="entry name" value="LIM1_TLP"/>
    <property type="match status" value="2"/>
</dbReference>
<dbReference type="FunFam" id="2.10.110.10:FF:000025">
    <property type="entry name" value="Cysteine-rich protein 2"/>
    <property type="match status" value="2"/>
</dbReference>
<dbReference type="Gene3D" id="2.10.110.10">
    <property type="entry name" value="Cysteine Rich Protein"/>
    <property type="match status" value="2"/>
</dbReference>
<dbReference type="InterPro" id="IPR001781">
    <property type="entry name" value="Znf_LIM"/>
</dbReference>
<dbReference type="PANTHER" id="PTHR46074:SF2">
    <property type="entry name" value="CYSTEINE-RICH PROTEIN 2"/>
    <property type="match status" value="1"/>
</dbReference>
<dbReference type="PANTHER" id="PTHR46074">
    <property type="entry name" value="CYSTEINE-RICH PROTEIN CRIP FAMILY MEMBER"/>
    <property type="match status" value="1"/>
</dbReference>
<dbReference type="Pfam" id="PF00412">
    <property type="entry name" value="LIM"/>
    <property type="match status" value="2"/>
</dbReference>
<dbReference type="SMART" id="SM00132">
    <property type="entry name" value="LIM"/>
    <property type="match status" value="2"/>
</dbReference>
<dbReference type="SUPFAM" id="SSF57716">
    <property type="entry name" value="Glucocorticoid receptor-like (DNA-binding domain)"/>
    <property type="match status" value="4"/>
</dbReference>
<dbReference type="PROSITE" id="PS00478">
    <property type="entry name" value="LIM_DOMAIN_1"/>
    <property type="match status" value="2"/>
</dbReference>
<dbReference type="PROSITE" id="PS50023">
    <property type="entry name" value="LIM_DOMAIN_2"/>
    <property type="match status" value="2"/>
</dbReference>
<feature type="chain" id="PRO_0000075713" description="Cysteine-rich protein 2">
    <location>
        <begin position="1"/>
        <end position="208"/>
    </location>
</feature>
<feature type="domain" description="LIM zinc-binding 1" evidence="4">
    <location>
        <begin position="5"/>
        <end position="57"/>
    </location>
</feature>
<feature type="domain" description="LIM zinc-binding 2" evidence="4">
    <location>
        <begin position="126"/>
        <end position="178"/>
    </location>
</feature>
<feature type="modified residue" description="N6-acetyllysine" evidence="3">
    <location>
        <position position="23"/>
    </location>
</feature>
<feature type="modified residue" description="Phosphoserine" evidence="2">
    <location>
        <position position="104"/>
    </location>
</feature>
<feature type="modified residue" description="N6-acetyllysine" evidence="2">
    <location>
        <position position="138"/>
    </location>
</feature>
<feature type="modified residue" description="N6-acetyllysine" evidence="3">
    <location>
        <position position="144"/>
    </location>
</feature>
<sequence>MASKCPKCDKTVYFAEKVSSLGKDWHKFCLKCERCNKTLTPGGHAEHDGKPFCHKPCYATLFGPKGVNIGGAGSYIYEKPPTEAPQVTGPIEVPVVRTEERKTSGPPKGPSKASSVTTFTGEPNMCPRCNKRVYFAEKVTSLGKDWHRPCLRCERCSKTLTPGGHAEHDGQPYCHKPCYGILFGPKGVNTGAVGSYIYDKDPEGTVQP</sequence>
<accession>P36201</accession>
<proteinExistence type="evidence at transcript level"/>
<name>CRIP2_RAT</name>
<evidence type="ECO:0000250" key="1"/>
<evidence type="ECO:0000250" key="2">
    <source>
        <dbReference type="UniProtKB" id="P52943"/>
    </source>
</evidence>
<evidence type="ECO:0000250" key="3">
    <source>
        <dbReference type="UniProtKB" id="Q9DCT8"/>
    </source>
</evidence>
<evidence type="ECO:0000255" key="4">
    <source>
        <dbReference type="PROSITE-ProRule" id="PRU00125"/>
    </source>
</evidence>
<protein>
    <recommendedName>
        <fullName>Cysteine-rich protein 2</fullName>
        <shortName>CRP-2</shortName>
    </recommendedName>
    <alternativeName>
        <fullName>Protein ESP1</fullName>
    </alternativeName>
</protein>
<comment type="subunit">
    <text evidence="1">Interacts with TGFB1I1.</text>
</comment>
<comment type="tissue specificity">
    <text>Expressed more abundantly in liver and kidney of females than that of males. Equally expressed in brain, lung and heart.</text>
</comment>
<organism>
    <name type="scientific">Rattus norvegicus</name>
    <name type="common">Rat</name>
    <dbReference type="NCBI Taxonomy" id="10116"/>
    <lineage>
        <taxon>Eukaryota</taxon>
        <taxon>Metazoa</taxon>
        <taxon>Chordata</taxon>
        <taxon>Craniata</taxon>
        <taxon>Vertebrata</taxon>
        <taxon>Euteleostomi</taxon>
        <taxon>Mammalia</taxon>
        <taxon>Eutheria</taxon>
        <taxon>Euarchontoglires</taxon>
        <taxon>Glires</taxon>
        <taxon>Rodentia</taxon>
        <taxon>Myomorpha</taxon>
        <taxon>Muroidea</taxon>
        <taxon>Muridae</taxon>
        <taxon>Murinae</taxon>
        <taxon>Rattus</taxon>
    </lineage>
</organism>